<comment type="function">
    <text evidence="1">Positive regulator of sigma-B activity. Non-phosphorylated RsbV binds to RsbW, preventing its association with sigma-B. When phosphorylated, releases RsbW, which is then free to complex with and inactivate sigma-B (By similarity).</text>
</comment>
<comment type="PTM">
    <text evidence="1">Phosphorylated by RsbW on a serine residue.</text>
</comment>
<comment type="similarity">
    <text evidence="3">Belongs to the anti-sigma-factor antagonist family.</text>
</comment>
<organism>
    <name type="scientific">Staphylococcus aureus (strain Mu50 / ATCC 700699)</name>
    <dbReference type="NCBI Taxonomy" id="158878"/>
    <lineage>
        <taxon>Bacteria</taxon>
        <taxon>Bacillati</taxon>
        <taxon>Bacillota</taxon>
        <taxon>Bacilli</taxon>
        <taxon>Bacillales</taxon>
        <taxon>Staphylococcaceae</taxon>
        <taxon>Staphylococcus</taxon>
    </lineage>
</organism>
<gene>
    <name type="primary">rsbV</name>
    <name type="ordered locus">SAV2066</name>
</gene>
<sequence length="108" mass="12205">MNLNIETTTQDKFYEVKVGGELDVYTVPELEEVLTPMRQDGTRDIYVNLENVSYMDSTGLGLFVGTLKALNQNDKELYILGVSDRIGRLFEITGLKDLMHVNEGTEVE</sequence>
<name>RSBV_STAAM</name>
<dbReference type="EMBL" id="BA000017">
    <property type="protein sequence ID" value="BAB58228.1"/>
    <property type="molecule type" value="Genomic_DNA"/>
</dbReference>
<dbReference type="RefSeq" id="WP_001052491.1">
    <property type="nucleotide sequence ID" value="NC_002758.2"/>
</dbReference>
<dbReference type="SMR" id="P66837"/>
<dbReference type="KEGG" id="sav:SAV2066"/>
<dbReference type="HOGENOM" id="CLU_115403_9_3_9"/>
<dbReference type="PhylomeDB" id="P66837"/>
<dbReference type="Proteomes" id="UP000002481">
    <property type="component" value="Chromosome"/>
</dbReference>
<dbReference type="GO" id="GO:0043856">
    <property type="term" value="F:anti-sigma factor antagonist activity"/>
    <property type="evidence" value="ECO:0007669"/>
    <property type="project" value="InterPro"/>
</dbReference>
<dbReference type="CDD" id="cd07043">
    <property type="entry name" value="STAS_anti-anti-sigma_factors"/>
    <property type="match status" value="1"/>
</dbReference>
<dbReference type="FunFam" id="3.30.750.24:FF:000001">
    <property type="entry name" value="Anti-sigma factor antagonist"/>
    <property type="match status" value="1"/>
</dbReference>
<dbReference type="Gene3D" id="3.30.750.24">
    <property type="entry name" value="STAS domain"/>
    <property type="match status" value="1"/>
</dbReference>
<dbReference type="InterPro" id="IPR003658">
    <property type="entry name" value="Anti-sigma_ant"/>
</dbReference>
<dbReference type="InterPro" id="IPR002645">
    <property type="entry name" value="STAS_dom"/>
</dbReference>
<dbReference type="InterPro" id="IPR036513">
    <property type="entry name" value="STAS_dom_sf"/>
</dbReference>
<dbReference type="NCBIfam" id="TIGR00377">
    <property type="entry name" value="ant_ant_sig"/>
    <property type="match status" value="1"/>
</dbReference>
<dbReference type="PANTHER" id="PTHR33495">
    <property type="entry name" value="ANTI-SIGMA FACTOR ANTAGONIST TM_1081-RELATED-RELATED"/>
    <property type="match status" value="1"/>
</dbReference>
<dbReference type="PANTHER" id="PTHR33495:SF9">
    <property type="entry name" value="ANTI-SIGMA-B FACTOR ANTAGONIST"/>
    <property type="match status" value="1"/>
</dbReference>
<dbReference type="Pfam" id="PF01740">
    <property type="entry name" value="STAS"/>
    <property type="match status" value="1"/>
</dbReference>
<dbReference type="SUPFAM" id="SSF52091">
    <property type="entry name" value="SpoIIaa-like"/>
    <property type="match status" value="1"/>
</dbReference>
<dbReference type="PROSITE" id="PS50801">
    <property type="entry name" value="STAS"/>
    <property type="match status" value="1"/>
</dbReference>
<evidence type="ECO:0000250" key="1"/>
<evidence type="ECO:0000255" key="2">
    <source>
        <dbReference type="PROSITE-ProRule" id="PRU00198"/>
    </source>
</evidence>
<evidence type="ECO:0000305" key="3"/>
<feature type="chain" id="PRO_0000194189" description="Anti-sigma-B factor antagonist">
    <location>
        <begin position="1"/>
        <end position="108"/>
    </location>
</feature>
<feature type="domain" description="STAS" evidence="2">
    <location>
        <begin position="3"/>
        <end position="108"/>
    </location>
</feature>
<feature type="modified residue" description="Phosphoserine" evidence="1">
    <location>
        <position position="57"/>
    </location>
</feature>
<accession>P66837</accession>
<accession>Q925Z9</accession>
<protein>
    <recommendedName>
        <fullName>Anti-sigma-B factor antagonist</fullName>
    </recommendedName>
    <alternativeName>
        <fullName>Anti-anti-sigma-B factor</fullName>
    </alternativeName>
</protein>
<reference key="1">
    <citation type="journal article" date="2001" name="Lancet">
        <title>Whole genome sequencing of meticillin-resistant Staphylococcus aureus.</title>
        <authorList>
            <person name="Kuroda M."/>
            <person name="Ohta T."/>
            <person name="Uchiyama I."/>
            <person name="Baba T."/>
            <person name="Yuzawa H."/>
            <person name="Kobayashi I."/>
            <person name="Cui L."/>
            <person name="Oguchi A."/>
            <person name="Aoki K."/>
            <person name="Nagai Y."/>
            <person name="Lian J.-Q."/>
            <person name="Ito T."/>
            <person name="Kanamori M."/>
            <person name="Matsumaru H."/>
            <person name="Maruyama A."/>
            <person name="Murakami H."/>
            <person name="Hosoyama A."/>
            <person name="Mizutani-Ui Y."/>
            <person name="Takahashi N.K."/>
            <person name="Sawano T."/>
            <person name="Inoue R."/>
            <person name="Kaito C."/>
            <person name="Sekimizu K."/>
            <person name="Hirakawa H."/>
            <person name="Kuhara S."/>
            <person name="Goto S."/>
            <person name="Yabuzaki J."/>
            <person name="Kanehisa M."/>
            <person name="Yamashita A."/>
            <person name="Oshima K."/>
            <person name="Furuya K."/>
            <person name="Yoshino C."/>
            <person name="Shiba T."/>
            <person name="Hattori M."/>
            <person name="Ogasawara N."/>
            <person name="Hayashi H."/>
            <person name="Hiramatsu K."/>
        </authorList>
    </citation>
    <scope>NUCLEOTIDE SEQUENCE [LARGE SCALE GENOMIC DNA]</scope>
    <source>
        <strain>Mu50 / ATCC 700699</strain>
    </source>
</reference>
<proteinExistence type="inferred from homology"/>
<keyword id="KW-0597">Phosphoprotein</keyword>